<proteinExistence type="inferred from homology"/>
<evidence type="ECO:0000255" key="1">
    <source>
        <dbReference type="HAMAP-Rule" id="MF_00048"/>
    </source>
</evidence>
<name>Y2282_DEIRA</name>
<reference key="1">
    <citation type="journal article" date="1999" name="Science">
        <title>Genome sequence of the radioresistant bacterium Deinococcus radiodurans R1.</title>
        <authorList>
            <person name="White O."/>
            <person name="Eisen J.A."/>
            <person name="Heidelberg J.F."/>
            <person name="Hickey E.K."/>
            <person name="Peterson J.D."/>
            <person name="Dodson R.J."/>
            <person name="Haft D.H."/>
            <person name="Gwinn M.L."/>
            <person name="Nelson W.C."/>
            <person name="Richardson D.L."/>
            <person name="Moffat K.S."/>
            <person name="Qin H."/>
            <person name="Jiang L."/>
            <person name="Pamphile W."/>
            <person name="Crosby M."/>
            <person name="Shen M."/>
            <person name="Vamathevan J.J."/>
            <person name="Lam P."/>
            <person name="McDonald L.A."/>
            <person name="Utterback T.R."/>
            <person name="Zalewski C."/>
            <person name="Makarova K.S."/>
            <person name="Aravind L."/>
            <person name="Daly M.J."/>
            <person name="Minton K.W."/>
            <person name="Fleischmann R.D."/>
            <person name="Ketchum K.A."/>
            <person name="Nelson K.E."/>
            <person name="Salzberg S.L."/>
            <person name="Smith H.O."/>
            <person name="Venter J.C."/>
            <person name="Fraser C.M."/>
        </authorList>
    </citation>
    <scope>NUCLEOTIDE SEQUENCE [LARGE SCALE GENOMIC DNA]</scope>
    <source>
        <strain>ATCC 13939 / DSM 20539 / JCM 16871 / CCUG 27074 / LMG 4051 / NBRC 15346 / NCIMB 9279 / VKM B-1422 / R1</strain>
    </source>
</reference>
<accession>Q9RS45</accession>
<organism>
    <name type="scientific">Deinococcus radiodurans (strain ATCC 13939 / DSM 20539 / JCM 16871 / CCUG 27074 / LMG 4051 / NBRC 15346 / NCIMB 9279 / VKM B-1422 / R1)</name>
    <dbReference type="NCBI Taxonomy" id="243230"/>
    <lineage>
        <taxon>Bacteria</taxon>
        <taxon>Thermotogati</taxon>
        <taxon>Deinococcota</taxon>
        <taxon>Deinococci</taxon>
        <taxon>Deinococcales</taxon>
        <taxon>Deinococcaceae</taxon>
        <taxon>Deinococcus</taxon>
    </lineage>
</organism>
<comment type="similarity">
    <text evidence="1">Belongs to the UPF0102 family.</text>
</comment>
<protein>
    <recommendedName>
        <fullName evidence="1">UPF0102 protein DR_2282</fullName>
    </recommendedName>
</protein>
<sequence>MPTSRPRGIHQGAAAEARAAAHLESLGREIVRRNYRIPGGEIDLVSREPGGTLVFTEVRQRRQARYGSALDSVTPRKLALMHRAALEYLTRECGRDDLPCRLEVLTIEGEADTGELRLLAVEG</sequence>
<dbReference type="EMBL" id="AE000513">
    <property type="protein sequence ID" value="AAF11828.1"/>
    <property type="molecule type" value="Genomic_DNA"/>
</dbReference>
<dbReference type="PIR" id="F75293">
    <property type="entry name" value="F75293"/>
</dbReference>
<dbReference type="RefSeq" id="NP_296003.1">
    <property type="nucleotide sequence ID" value="NC_001263.1"/>
</dbReference>
<dbReference type="RefSeq" id="WP_010888910.1">
    <property type="nucleotide sequence ID" value="NC_001263.1"/>
</dbReference>
<dbReference type="SMR" id="Q9RS45"/>
<dbReference type="STRING" id="243230.DR_2282"/>
<dbReference type="PaxDb" id="243230-DR_2282"/>
<dbReference type="EnsemblBacteria" id="AAF11828">
    <property type="protein sequence ID" value="AAF11828"/>
    <property type="gene ID" value="DR_2282"/>
</dbReference>
<dbReference type="GeneID" id="69518533"/>
<dbReference type="KEGG" id="dra:DR_2282"/>
<dbReference type="PATRIC" id="fig|243230.17.peg.2511"/>
<dbReference type="eggNOG" id="COG0792">
    <property type="taxonomic scope" value="Bacteria"/>
</dbReference>
<dbReference type="HOGENOM" id="CLU_115353_1_1_0"/>
<dbReference type="InParanoid" id="Q9RS45"/>
<dbReference type="OrthoDB" id="9802516at2"/>
<dbReference type="Proteomes" id="UP000002524">
    <property type="component" value="Chromosome 1"/>
</dbReference>
<dbReference type="GO" id="GO:0003676">
    <property type="term" value="F:nucleic acid binding"/>
    <property type="evidence" value="ECO:0007669"/>
    <property type="project" value="InterPro"/>
</dbReference>
<dbReference type="Gene3D" id="3.40.1350.10">
    <property type="match status" value="1"/>
</dbReference>
<dbReference type="HAMAP" id="MF_00048">
    <property type="entry name" value="UPF0102"/>
    <property type="match status" value="1"/>
</dbReference>
<dbReference type="InterPro" id="IPR011335">
    <property type="entry name" value="Restrct_endonuc-II-like"/>
</dbReference>
<dbReference type="InterPro" id="IPR011856">
    <property type="entry name" value="tRNA_endonuc-like_dom_sf"/>
</dbReference>
<dbReference type="InterPro" id="IPR003509">
    <property type="entry name" value="UPF0102_YraN-like"/>
</dbReference>
<dbReference type="NCBIfam" id="NF009150">
    <property type="entry name" value="PRK12497.1-3"/>
    <property type="match status" value="1"/>
</dbReference>
<dbReference type="NCBIfam" id="TIGR00252">
    <property type="entry name" value="YraN family protein"/>
    <property type="match status" value="1"/>
</dbReference>
<dbReference type="PANTHER" id="PTHR34039">
    <property type="entry name" value="UPF0102 PROTEIN YRAN"/>
    <property type="match status" value="1"/>
</dbReference>
<dbReference type="PANTHER" id="PTHR34039:SF1">
    <property type="entry name" value="UPF0102 PROTEIN YRAN"/>
    <property type="match status" value="1"/>
</dbReference>
<dbReference type="Pfam" id="PF02021">
    <property type="entry name" value="UPF0102"/>
    <property type="match status" value="1"/>
</dbReference>
<dbReference type="SUPFAM" id="SSF52980">
    <property type="entry name" value="Restriction endonuclease-like"/>
    <property type="match status" value="1"/>
</dbReference>
<feature type="chain" id="PRO_0000167348" description="UPF0102 protein DR_2282">
    <location>
        <begin position="1"/>
        <end position="123"/>
    </location>
</feature>
<keyword id="KW-1185">Reference proteome</keyword>
<gene>
    <name type="ordered locus">DR_2282</name>
</gene>